<organism>
    <name type="scientific">Gadus morhua</name>
    <name type="common">Atlantic cod</name>
    <dbReference type="NCBI Taxonomy" id="8049"/>
    <lineage>
        <taxon>Eukaryota</taxon>
        <taxon>Metazoa</taxon>
        <taxon>Chordata</taxon>
        <taxon>Craniata</taxon>
        <taxon>Vertebrata</taxon>
        <taxon>Euteleostomi</taxon>
        <taxon>Actinopterygii</taxon>
        <taxon>Neopterygii</taxon>
        <taxon>Teleostei</taxon>
        <taxon>Neoteleostei</taxon>
        <taxon>Acanthomorphata</taxon>
        <taxon>Zeiogadaria</taxon>
        <taxon>Gadariae</taxon>
        <taxon>Gadiformes</taxon>
        <taxon>Gadoidei</taxon>
        <taxon>Gadidae</taxon>
        <taxon>Gadus</taxon>
    </lineage>
</organism>
<accession>P32197</accession>
<protein>
    <recommendedName>
        <fullName>Elastase</fullName>
        <ecNumber>3.4.21.-</ecNumber>
    </recommendedName>
</protein>
<keyword id="KW-0903">Direct protein sequencing</keyword>
<keyword id="KW-0378">Hydrolase</keyword>
<keyword id="KW-0645">Protease</keyword>
<keyword id="KW-1185">Reference proteome</keyword>
<keyword id="KW-0720">Serine protease</keyword>
<evidence type="ECO:0000255" key="1">
    <source>
        <dbReference type="PROSITE-ProRule" id="PRU00274"/>
    </source>
</evidence>
<feature type="chain" id="PRO_0000088678" description="Elastase">
    <location>
        <begin position="1"/>
        <end position="20" status="greater than"/>
    </location>
</feature>
<feature type="domain" description="Peptidase S1" evidence="1">
    <location>
        <begin position="1"/>
        <end position="20" status="greater than"/>
    </location>
</feature>
<feature type="non-terminal residue">
    <location>
        <position position="20"/>
    </location>
</feature>
<comment type="function">
    <text>Digests most rapidly at the C-terminal side of alanine residues, but also cleaves at valine and leucine residues.</text>
</comment>
<comment type="similarity">
    <text evidence="1">Belongs to the peptidase S1 family. Elastase subfamily.</text>
</comment>
<dbReference type="EC" id="3.4.21.-"/>
<dbReference type="PIR" id="S33787">
    <property type="entry name" value="S33787"/>
</dbReference>
<dbReference type="STRING" id="8049.ENSGMOP00000014078"/>
<dbReference type="MEROPS" id="S01.153"/>
<dbReference type="Proteomes" id="UP000694546">
    <property type="component" value="Unplaced"/>
</dbReference>
<dbReference type="GO" id="GO:0008236">
    <property type="term" value="F:serine-type peptidase activity"/>
    <property type="evidence" value="ECO:0007669"/>
    <property type="project" value="UniProtKB-KW"/>
</dbReference>
<dbReference type="GO" id="GO:0006508">
    <property type="term" value="P:proteolysis"/>
    <property type="evidence" value="ECO:0007669"/>
    <property type="project" value="UniProtKB-KW"/>
</dbReference>
<dbReference type="Gene3D" id="2.40.10.10">
    <property type="entry name" value="Trypsin-like serine proteases"/>
    <property type="match status" value="1"/>
</dbReference>
<dbReference type="InterPro" id="IPR009003">
    <property type="entry name" value="Peptidase_S1_PA"/>
</dbReference>
<dbReference type="InterPro" id="IPR043504">
    <property type="entry name" value="Peptidase_S1_PA_chymotrypsin"/>
</dbReference>
<dbReference type="SUPFAM" id="SSF50494">
    <property type="entry name" value="Trypsin-like serine proteases"/>
    <property type="match status" value="1"/>
</dbReference>
<reference key="1">
    <citation type="journal article" date="1993" name="Biochim. Biophys. Acta">
        <title>Properties of elastase from Atlantic cod, a cold-adapted proteinase.</title>
        <authorList>
            <person name="Asgeirsson B."/>
            <person name="Bjarnason J.B."/>
        </authorList>
    </citation>
    <scope>PROTEIN SEQUENCE</scope>
    <source>
        <tissue>Intestine</tissue>
    </source>
</reference>
<proteinExistence type="evidence at protein level"/>
<sequence length="20" mass="2284">VVGGEVARAHSWPWQISLQY</sequence>
<name>ELAS_GADMO</name>